<proteinExistence type="inferred from homology"/>
<sequence>MSSSLQSNRQSLNRKVAVMGYPHVGKSALVLRFTQNIFPERYESTIEDQHSKHIAAFHRDYHLRVTDTAGQQEYTVFPRSCSLDINGFILVYAIDDRKSFEMCSNIYEKIVRTYGDTSIPIVIVGNKTDLSTQRVVRAEEGEELARQWDAKFVEITARESNRVHEVFELLLREIEISRGNLSPTERPNGNSPKRNPFKDDGKPCSIS</sequence>
<feature type="chain" id="PRO_0000082714" description="GTP-binding protein Rheb homolog 1">
    <location>
        <begin position="1"/>
        <end position="204"/>
    </location>
</feature>
<feature type="propeptide" id="PRO_0000281371" description="Removed in mature form" evidence="1">
    <location>
        <begin position="205"/>
        <end position="207"/>
    </location>
</feature>
<feature type="region of interest" description="Disordered" evidence="3">
    <location>
        <begin position="180"/>
        <end position="207"/>
    </location>
</feature>
<feature type="short sequence motif" description="Effector region">
    <location>
        <begin position="42"/>
        <end position="50"/>
    </location>
</feature>
<feature type="compositionally biased region" description="Polar residues" evidence="3">
    <location>
        <begin position="180"/>
        <end position="193"/>
    </location>
</feature>
<feature type="compositionally biased region" description="Basic and acidic residues" evidence="3">
    <location>
        <begin position="196"/>
        <end position="207"/>
    </location>
</feature>
<feature type="binding site" evidence="2">
    <location>
        <position position="25"/>
    </location>
    <ligand>
        <name>GTP</name>
        <dbReference type="ChEBI" id="CHEBI:37565"/>
    </ligand>
</feature>
<feature type="binding site" evidence="2">
    <location>
        <position position="26"/>
    </location>
    <ligand>
        <name>GTP</name>
        <dbReference type="ChEBI" id="CHEBI:37565"/>
    </ligand>
</feature>
<feature type="binding site" evidence="2">
    <location>
        <position position="27"/>
    </location>
    <ligand>
        <name>GTP</name>
        <dbReference type="ChEBI" id="CHEBI:37565"/>
    </ligand>
</feature>
<feature type="binding site" evidence="2">
    <location>
        <position position="27"/>
    </location>
    <ligand>
        <name>Mg(2+)</name>
        <dbReference type="ChEBI" id="CHEBI:18420"/>
    </ligand>
</feature>
<feature type="binding site" evidence="2">
    <location>
        <position position="42"/>
    </location>
    <ligand>
        <name>GTP</name>
        <dbReference type="ChEBI" id="CHEBI:37565"/>
    </ligand>
</feature>
<feature type="binding site" evidence="2">
    <location>
        <position position="45"/>
    </location>
    <ligand>
        <name>GTP</name>
        <dbReference type="ChEBI" id="CHEBI:37565"/>
    </ligand>
</feature>
<feature type="binding site" evidence="2">
    <location>
        <position position="45"/>
    </location>
    <ligand>
        <name>Mg(2+)</name>
        <dbReference type="ChEBI" id="CHEBI:18420"/>
    </ligand>
</feature>
<feature type="binding site" evidence="2">
    <location>
        <position position="126"/>
    </location>
    <ligand>
        <name>GTP</name>
        <dbReference type="ChEBI" id="CHEBI:37565"/>
    </ligand>
</feature>
<feature type="binding site" evidence="2">
    <location>
        <position position="129"/>
    </location>
    <ligand>
        <name>GTP</name>
        <dbReference type="ChEBI" id="CHEBI:37565"/>
    </ligand>
</feature>
<feature type="binding site" evidence="2">
    <location>
        <position position="157"/>
    </location>
    <ligand>
        <name>GTP</name>
        <dbReference type="ChEBI" id="CHEBI:37565"/>
    </ligand>
</feature>
<feature type="modified residue" description="Cysteine methyl ester" evidence="1">
    <location>
        <position position="204"/>
    </location>
</feature>
<feature type="lipid moiety-binding region" description="S-farnesyl cysteine" evidence="1">
    <location>
        <position position="204"/>
    </location>
</feature>
<protein>
    <recommendedName>
        <fullName>GTP-binding protein Rheb homolog 1</fullName>
        <ecNumber evidence="2">3.6.5.-</ecNumber>
    </recommendedName>
</protein>
<gene>
    <name type="primary">rheb-1</name>
    <name type="ORF">F54C8.5</name>
</gene>
<accession>P34443</accession>
<organism>
    <name type="scientific">Caenorhabditis elegans</name>
    <dbReference type="NCBI Taxonomy" id="6239"/>
    <lineage>
        <taxon>Eukaryota</taxon>
        <taxon>Metazoa</taxon>
        <taxon>Ecdysozoa</taxon>
        <taxon>Nematoda</taxon>
        <taxon>Chromadorea</taxon>
        <taxon>Rhabditida</taxon>
        <taxon>Rhabditina</taxon>
        <taxon>Rhabditomorpha</taxon>
        <taxon>Rhabditoidea</taxon>
        <taxon>Rhabditidae</taxon>
        <taxon>Peloderinae</taxon>
        <taxon>Caenorhabditis</taxon>
    </lineage>
</organism>
<keyword id="KW-1003">Cell membrane</keyword>
<keyword id="KW-0342">GTP-binding</keyword>
<keyword id="KW-0378">Hydrolase</keyword>
<keyword id="KW-0449">Lipoprotein</keyword>
<keyword id="KW-0460">Magnesium</keyword>
<keyword id="KW-0472">Membrane</keyword>
<keyword id="KW-0479">Metal-binding</keyword>
<keyword id="KW-0488">Methylation</keyword>
<keyword id="KW-0547">Nucleotide-binding</keyword>
<keyword id="KW-0636">Prenylation</keyword>
<keyword id="KW-1185">Reference proteome</keyword>
<name>RHEB1_CAEEL</name>
<evidence type="ECO:0000250" key="1"/>
<evidence type="ECO:0000250" key="2">
    <source>
        <dbReference type="UniProtKB" id="Q15382"/>
    </source>
</evidence>
<evidence type="ECO:0000256" key="3">
    <source>
        <dbReference type="SAM" id="MobiDB-lite"/>
    </source>
</evidence>
<evidence type="ECO:0000269" key="4">
    <source>
    </source>
</evidence>
<evidence type="ECO:0000305" key="5"/>
<comment type="function">
    <text evidence="2">Binds GTP and exhibits intrinsic GTPase activity.</text>
</comment>
<comment type="catalytic activity">
    <reaction evidence="2">
        <text>GTP + H2O = GDP + phosphate + H(+)</text>
        <dbReference type="Rhea" id="RHEA:19669"/>
        <dbReference type="ChEBI" id="CHEBI:15377"/>
        <dbReference type="ChEBI" id="CHEBI:15378"/>
        <dbReference type="ChEBI" id="CHEBI:37565"/>
        <dbReference type="ChEBI" id="CHEBI:43474"/>
        <dbReference type="ChEBI" id="CHEBI:58189"/>
    </reaction>
    <physiologicalReaction direction="left-to-right" evidence="2">
        <dbReference type="Rhea" id="RHEA:19670"/>
    </physiologicalReaction>
</comment>
<comment type="subcellular location">
    <subcellularLocation>
        <location evidence="5">Cell membrane</location>
        <topology evidence="5">Lipid-anchor</topology>
        <orientation evidence="5">Cytoplasmic side</orientation>
    </subcellularLocation>
</comment>
<comment type="disruption phenotype">
    <text evidence="4">Inactivation promotes nuclear redistribution of dve-1, induction of ubl-5 and complex formation with dve-1.</text>
</comment>
<comment type="similarity">
    <text evidence="5">Belongs to the small GTPase superfamily. Rheb family.</text>
</comment>
<reference key="1">
    <citation type="journal article" date="1994" name="Nature">
        <title>2.2 Mb of contiguous nucleotide sequence from chromosome III of C. elegans.</title>
        <authorList>
            <person name="Wilson R."/>
            <person name="Ainscough R."/>
            <person name="Anderson K."/>
            <person name="Baynes C."/>
            <person name="Berks M."/>
            <person name="Bonfield J."/>
            <person name="Burton J."/>
            <person name="Connell M."/>
            <person name="Copsey T."/>
            <person name="Cooper J."/>
            <person name="Coulson A."/>
            <person name="Craxton M."/>
            <person name="Dear S."/>
            <person name="Du Z."/>
            <person name="Durbin R."/>
            <person name="Favello A."/>
            <person name="Fraser A."/>
            <person name="Fulton L."/>
            <person name="Gardner A."/>
            <person name="Green P."/>
            <person name="Hawkins T."/>
            <person name="Hillier L."/>
            <person name="Jier M."/>
            <person name="Johnston L."/>
            <person name="Jones M."/>
            <person name="Kershaw J."/>
            <person name="Kirsten J."/>
            <person name="Laisster N."/>
            <person name="Latreille P."/>
            <person name="Lightning J."/>
            <person name="Lloyd C."/>
            <person name="Mortimore B."/>
            <person name="O'Callaghan M."/>
            <person name="Parsons J."/>
            <person name="Percy C."/>
            <person name="Rifken L."/>
            <person name="Roopra A."/>
            <person name="Saunders D."/>
            <person name="Shownkeen R."/>
            <person name="Sims M."/>
            <person name="Smaldon N."/>
            <person name="Smith A."/>
            <person name="Smith M."/>
            <person name="Sonnhammer E."/>
            <person name="Staden R."/>
            <person name="Sulston J."/>
            <person name="Thierry-Mieg J."/>
            <person name="Thomas K."/>
            <person name="Vaudin M."/>
            <person name="Vaughan K."/>
            <person name="Waterston R."/>
            <person name="Watson A."/>
            <person name="Weinstock L."/>
            <person name="Wilkinson-Sproat J."/>
            <person name="Wohldman P."/>
        </authorList>
    </citation>
    <scope>NUCLEOTIDE SEQUENCE [LARGE SCALE GENOMIC DNA]</scope>
    <source>
        <strain>Bristol N2</strain>
    </source>
</reference>
<reference key="2">
    <citation type="journal article" date="1998" name="Science">
        <title>Genome sequence of the nematode C. elegans: a platform for investigating biology.</title>
        <authorList>
            <consortium name="The C. elegans sequencing consortium"/>
        </authorList>
    </citation>
    <scope>NUCLEOTIDE SEQUENCE [LARGE SCALE GENOMIC DNA]</scope>
    <source>
        <strain>Bristol N2</strain>
    </source>
</reference>
<reference key="3">
    <citation type="journal article" date="2007" name="Dev. Cell">
        <title>ClpP mediates activation of a mitochondrial unfolded protein response in C. elegans.</title>
        <authorList>
            <person name="Haynes C.M."/>
            <person name="Petrova K."/>
            <person name="Benedetti C."/>
            <person name="Yang Y."/>
            <person name="Ron D."/>
        </authorList>
    </citation>
    <scope>DISRUPTION PHENOTYPE</scope>
</reference>
<dbReference type="EC" id="3.6.5.-" evidence="2"/>
<dbReference type="EMBL" id="Z22178">
    <property type="protein sequence ID" value="CAA80155.1"/>
    <property type="molecule type" value="Genomic_DNA"/>
</dbReference>
<dbReference type="PIR" id="S40747">
    <property type="entry name" value="S40747"/>
</dbReference>
<dbReference type="RefSeq" id="NP_499079.1">
    <property type="nucleotide sequence ID" value="NM_066678.4"/>
</dbReference>
<dbReference type="SMR" id="P34443"/>
<dbReference type="BioGRID" id="41524">
    <property type="interactions" value="1"/>
</dbReference>
<dbReference type="FunCoup" id="P34443">
    <property type="interactions" value="2344"/>
</dbReference>
<dbReference type="IntAct" id="P34443">
    <property type="interactions" value="1"/>
</dbReference>
<dbReference type="STRING" id="6239.F54C8.5.1"/>
<dbReference type="iPTMnet" id="P34443"/>
<dbReference type="PaxDb" id="6239-F54C8.5"/>
<dbReference type="PeptideAtlas" id="P34443"/>
<dbReference type="EnsemblMetazoa" id="F54C8.5.1">
    <property type="protein sequence ID" value="F54C8.5.1"/>
    <property type="gene ID" value="WBGene00010038"/>
</dbReference>
<dbReference type="GeneID" id="176327"/>
<dbReference type="KEGG" id="cel:CELE_F54C8.5"/>
<dbReference type="AGR" id="WB:WBGene00010038"/>
<dbReference type="CTD" id="176327"/>
<dbReference type="WormBase" id="F54C8.5">
    <property type="protein sequence ID" value="CE00191"/>
    <property type="gene ID" value="WBGene00010038"/>
    <property type="gene designation" value="rheb-1"/>
</dbReference>
<dbReference type="eggNOG" id="KOG0395">
    <property type="taxonomic scope" value="Eukaryota"/>
</dbReference>
<dbReference type="HOGENOM" id="CLU_041217_9_8_1"/>
<dbReference type="InParanoid" id="P34443"/>
<dbReference type="OMA" id="SARHNEN"/>
<dbReference type="OrthoDB" id="25818at2759"/>
<dbReference type="PhylomeDB" id="P34443"/>
<dbReference type="Reactome" id="R-CEL-1632852">
    <property type="pathway name" value="Macroautophagy"/>
</dbReference>
<dbReference type="Reactome" id="R-CEL-165159">
    <property type="pathway name" value="MTOR signalling"/>
</dbReference>
<dbReference type="Reactome" id="R-CEL-166208">
    <property type="pathway name" value="mTORC1-mediated signalling"/>
</dbReference>
<dbReference type="Reactome" id="R-CEL-380972">
    <property type="pathway name" value="Energy dependent regulation of mTOR by LKB1-AMPK"/>
</dbReference>
<dbReference type="Reactome" id="R-CEL-5628897">
    <property type="pathway name" value="TP53 Regulates Metabolic Genes"/>
</dbReference>
<dbReference type="Reactome" id="R-CEL-8943724">
    <property type="pathway name" value="Regulation of PTEN gene transcription"/>
</dbReference>
<dbReference type="Reactome" id="R-CEL-9639288">
    <property type="pathway name" value="Amino acids regulate mTORC1"/>
</dbReference>
<dbReference type="SignaLink" id="P34443"/>
<dbReference type="PRO" id="PR:P34443"/>
<dbReference type="Proteomes" id="UP000001940">
    <property type="component" value="Chromosome III"/>
</dbReference>
<dbReference type="Bgee" id="WBGene00010038">
    <property type="expression patterns" value="Expressed in germ line (C elegans) and 4 other cell types or tissues"/>
</dbReference>
<dbReference type="GO" id="GO:0005886">
    <property type="term" value="C:plasma membrane"/>
    <property type="evidence" value="ECO:0000318"/>
    <property type="project" value="GO_Central"/>
</dbReference>
<dbReference type="GO" id="GO:0019003">
    <property type="term" value="F:GDP binding"/>
    <property type="evidence" value="ECO:0000318"/>
    <property type="project" value="GO_Central"/>
</dbReference>
<dbReference type="GO" id="GO:0005525">
    <property type="term" value="F:GTP binding"/>
    <property type="evidence" value="ECO:0000318"/>
    <property type="project" value="GO_Central"/>
</dbReference>
<dbReference type="GO" id="GO:0003924">
    <property type="term" value="F:GTPase activity"/>
    <property type="evidence" value="ECO:0000318"/>
    <property type="project" value="GO_Central"/>
</dbReference>
<dbReference type="GO" id="GO:0046872">
    <property type="term" value="F:metal ion binding"/>
    <property type="evidence" value="ECO:0007669"/>
    <property type="project" value="UniProtKB-KW"/>
</dbReference>
<dbReference type="GO" id="GO:0032008">
    <property type="term" value="P:positive regulation of TOR signaling"/>
    <property type="evidence" value="ECO:0000250"/>
    <property type="project" value="WormBase"/>
</dbReference>
<dbReference type="GO" id="GO:0007264">
    <property type="term" value="P:small GTPase-mediated signal transduction"/>
    <property type="evidence" value="ECO:0000318"/>
    <property type="project" value="GO_Central"/>
</dbReference>
<dbReference type="CDD" id="cd04137">
    <property type="entry name" value="RheB"/>
    <property type="match status" value="1"/>
</dbReference>
<dbReference type="FunFam" id="3.40.50.300:FF:001447">
    <property type="entry name" value="Ras-related protein Rab-1B"/>
    <property type="match status" value="1"/>
</dbReference>
<dbReference type="Gene3D" id="3.40.50.300">
    <property type="entry name" value="P-loop containing nucleotide triphosphate hydrolases"/>
    <property type="match status" value="1"/>
</dbReference>
<dbReference type="InterPro" id="IPR027417">
    <property type="entry name" value="P-loop_NTPase"/>
</dbReference>
<dbReference type="InterPro" id="IPR005225">
    <property type="entry name" value="Small_GTP-bd"/>
</dbReference>
<dbReference type="InterPro" id="IPR001806">
    <property type="entry name" value="Small_GTPase"/>
</dbReference>
<dbReference type="InterPro" id="IPR020849">
    <property type="entry name" value="Small_GTPase_Ras-type"/>
</dbReference>
<dbReference type="NCBIfam" id="TIGR00231">
    <property type="entry name" value="small_GTP"/>
    <property type="match status" value="1"/>
</dbReference>
<dbReference type="PANTHER" id="PTHR24070">
    <property type="entry name" value="RAS, DI-RAS, AND RHEB FAMILY MEMBERS OF SMALL GTPASE SUPERFAMILY"/>
    <property type="match status" value="1"/>
</dbReference>
<dbReference type="Pfam" id="PF00071">
    <property type="entry name" value="Ras"/>
    <property type="match status" value="1"/>
</dbReference>
<dbReference type="PRINTS" id="PR00449">
    <property type="entry name" value="RASTRNSFRMNG"/>
</dbReference>
<dbReference type="SMART" id="SM00175">
    <property type="entry name" value="RAB"/>
    <property type="match status" value="1"/>
</dbReference>
<dbReference type="SMART" id="SM00173">
    <property type="entry name" value="RAS"/>
    <property type="match status" value="1"/>
</dbReference>
<dbReference type="SMART" id="SM00174">
    <property type="entry name" value="RHO"/>
    <property type="match status" value="1"/>
</dbReference>
<dbReference type="SUPFAM" id="SSF52540">
    <property type="entry name" value="P-loop containing nucleoside triphosphate hydrolases"/>
    <property type="match status" value="1"/>
</dbReference>
<dbReference type="PROSITE" id="PS51421">
    <property type="entry name" value="RAS"/>
    <property type="match status" value="1"/>
</dbReference>